<evidence type="ECO:0000255" key="1">
    <source>
        <dbReference type="HAMAP-Rule" id="MF_00736"/>
    </source>
</evidence>
<evidence type="ECO:0000305" key="2"/>
<protein>
    <recommendedName>
        <fullName evidence="1">Large ribosomal subunit protein uL11</fullName>
    </recommendedName>
    <alternativeName>
        <fullName evidence="2">50S ribosomal protein L11</fullName>
    </alternativeName>
</protein>
<gene>
    <name evidence="1" type="primary">rplK</name>
    <name type="ordered locus">YpAngola_A2806</name>
</gene>
<keyword id="KW-0488">Methylation</keyword>
<keyword id="KW-0687">Ribonucleoprotein</keyword>
<keyword id="KW-0689">Ribosomal protein</keyword>
<keyword id="KW-0694">RNA-binding</keyword>
<keyword id="KW-0699">rRNA-binding</keyword>
<dbReference type="EMBL" id="CP000901">
    <property type="protein sequence ID" value="ABX88217.1"/>
    <property type="molecule type" value="Genomic_DNA"/>
</dbReference>
<dbReference type="RefSeq" id="WP_012229807.1">
    <property type="nucleotide sequence ID" value="NC_010159.1"/>
</dbReference>
<dbReference type="SMR" id="A9QZM4"/>
<dbReference type="KEGG" id="ypg:YpAngola_A2806"/>
<dbReference type="PATRIC" id="fig|349746.12.peg.3839"/>
<dbReference type="GO" id="GO:0022625">
    <property type="term" value="C:cytosolic large ribosomal subunit"/>
    <property type="evidence" value="ECO:0007669"/>
    <property type="project" value="TreeGrafter"/>
</dbReference>
<dbReference type="GO" id="GO:0070180">
    <property type="term" value="F:large ribosomal subunit rRNA binding"/>
    <property type="evidence" value="ECO:0007669"/>
    <property type="project" value="UniProtKB-UniRule"/>
</dbReference>
<dbReference type="GO" id="GO:0003735">
    <property type="term" value="F:structural constituent of ribosome"/>
    <property type="evidence" value="ECO:0007669"/>
    <property type="project" value="InterPro"/>
</dbReference>
<dbReference type="GO" id="GO:0006412">
    <property type="term" value="P:translation"/>
    <property type="evidence" value="ECO:0007669"/>
    <property type="project" value="UniProtKB-UniRule"/>
</dbReference>
<dbReference type="CDD" id="cd00349">
    <property type="entry name" value="Ribosomal_L11"/>
    <property type="match status" value="1"/>
</dbReference>
<dbReference type="FunFam" id="1.10.10.250:FF:000001">
    <property type="entry name" value="50S ribosomal protein L11"/>
    <property type="match status" value="1"/>
</dbReference>
<dbReference type="FunFam" id="3.30.1550.10:FF:000001">
    <property type="entry name" value="50S ribosomal protein L11"/>
    <property type="match status" value="1"/>
</dbReference>
<dbReference type="Gene3D" id="1.10.10.250">
    <property type="entry name" value="Ribosomal protein L11, C-terminal domain"/>
    <property type="match status" value="1"/>
</dbReference>
<dbReference type="Gene3D" id="3.30.1550.10">
    <property type="entry name" value="Ribosomal protein L11/L12, N-terminal domain"/>
    <property type="match status" value="1"/>
</dbReference>
<dbReference type="HAMAP" id="MF_00736">
    <property type="entry name" value="Ribosomal_uL11"/>
    <property type="match status" value="1"/>
</dbReference>
<dbReference type="InterPro" id="IPR000911">
    <property type="entry name" value="Ribosomal_uL11"/>
</dbReference>
<dbReference type="InterPro" id="IPR006519">
    <property type="entry name" value="Ribosomal_uL11_bac-typ"/>
</dbReference>
<dbReference type="InterPro" id="IPR020783">
    <property type="entry name" value="Ribosomal_uL11_C"/>
</dbReference>
<dbReference type="InterPro" id="IPR036769">
    <property type="entry name" value="Ribosomal_uL11_C_sf"/>
</dbReference>
<dbReference type="InterPro" id="IPR020785">
    <property type="entry name" value="Ribosomal_uL11_CS"/>
</dbReference>
<dbReference type="InterPro" id="IPR020784">
    <property type="entry name" value="Ribosomal_uL11_N"/>
</dbReference>
<dbReference type="InterPro" id="IPR036796">
    <property type="entry name" value="Ribosomal_uL11_N_sf"/>
</dbReference>
<dbReference type="NCBIfam" id="TIGR01632">
    <property type="entry name" value="L11_bact"/>
    <property type="match status" value="1"/>
</dbReference>
<dbReference type="PANTHER" id="PTHR11661">
    <property type="entry name" value="60S RIBOSOMAL PROTEIN L12"/>
    <property type="match status" value="1"/>
</dbReference>
<dbReference type="PANTHER" id="PTHR11661:SF1">
    <property type="entry name" value="LARGE RIBOSOMAL SUBUNIT PROTEIN UL11M"/>
    <property type="match status" value="1"/>
</dbReference>
<dbReference type="Pfam" id="PF00298">
    <property type="entry name" value="Ribosomal_L11"/>
    <property type="match status" value="1"/>
</dbReference>
<dbReference type="Pfam" id="PF03946">
    <property type="entry name" value="Ribosomal_L11_N"/>
    <property type="match status" value="1"/>
</dbReference>
<dbReference type="SMART" id="SM00649">
    <property type="entry name" value="RL11"/>
    <property type="match status" value="1"/>
</dbReference>
<dbReference type="SUPFAM" id="SSF54747">
    <property type="entry name" value="Ribosomal L11/L12e N-terminal domain"/>
    <property type="match status" value="1"/>
</dbReference>
<dbReference type="SUPFAM" id="SSF46906">
    <property type="entry name" value="Ribosomal protein L11, C-terminal domain"/>
    <property type="match status" value="1"/>
</dbReference>
<dbReference type="PROSITE" id="PS00359">
    <property type="entry name" value="RIBOSOMAL_L11"/>
    <property type="match status" value="1"/>
</dbReference>
<name>RL11_YERPG</name>
<reference key="1">
    <citation type="journal article" date="2010" name="J. Bacteriol.">
        <title>Genome sequence of the deep-rooted Yersinia pestis strain Angola reveals new insights into the evolution and pangenome of the plague bacterium.</title>
        <authorList>
            <person name="Eppinger M."/>
            <person name="Worsham P.L."/>
            <person name="Nikolich M.P."/>
            <person name="Riley D.R."/>
            <person name="Sebastian Y."/>
            <person name="Mou S."/>
            <person name="Achtman M."/>
            <person name="Lindler L.E."/>
            <person name="Ravel J."/>
        </authorList>
    </citation>
    <scope>NUCLEOTIDE SEQUENCE [LARGE SCALE GENOMIC DNA]</scope>
    <source>
        <strain>Angola</strain>
    </source>
</reference>
<feature type="chain" id="PRO_1000195749" description="Large ribosomal subunit protein uL11">
    <location>
        <begin position="1"/>
        <end position="142"/>
    </location>
</feature>
<accession>A9QZM4</accession>
<sequence>MAKKVQAYVKLQVAAGMANPSPPVGPALGQQGVNIMEFCKAFNAKTESIEKGLPIPVVITVYSDRSFTFVTKTPPAAVLLKKAAGIKSGSGVPNKDKVGKVTSAQVREIAETKAADMTGSDVEAMMRSIEGTAHSMGLVVEG</sequence>
<organism>
    <name type="scientific">Yersinia pestis bv. Antiqua (strain Angola)</name>
    <dbReference type="NCBI Taxonomy" id="349746"/>
    <lineage>
        <taxon>Bacteria</taxon>
        <taxon>Pseudomonadati</taxon>
        <taxon>Pseudomonadota</taxon>
        <taxon>Gammaproteobacteria</taxon>
        <taxon>Enterobacterales</taxon>
        <taxon>Yersiniaceae</taxon>
        <taxon>Yersinia</taxon>
    </lineage>
</organism>
<proteinExistence type="inferred from homology"/>
<comment type="function">
    <text evidence="1">Forms part of the ribosomal stalk which helps the ribosome interact with GTP-bound translation factors.</text>
</comment>
<comment type="subunit">
    <text evidence="1">Part of the ribosomal stalk of the 50S ribosomal subunit. Interacts with L10 and the large rRNA to form the base of the stalk. L10 forms an elongated spine to which L12 dimers bind in a sequential fashion forming a multimeric L10(L12)X complex.</text>
</comment>
<comment type="PTM">
    <text evidence="1">One or more lysine residues are methylated.</text>
</comment>
<comment type="similarity">
    <text evidence="1">Belongs to the universal ribosomal protein uL11 family.</text>
</comment>